<gene>
    <name evidence="1" type="primary">gcvT</name>
    <name type="ordered locus">BA_4449</name>
    <name type="ordered locus">GBAA_4449</name>
    <name type="ordered locus">BAS4131</name>
</gene>
<name>GCST_BACAN</name>
<comment type="function">
    <text evidence="1">The glycine cleavage system catalyzes the degradation of glycine.</text>
</comment>
<comment type="catalytic activity">
    <reaction evidence="1">
        <text>N(6)-[(R)-S(8)-aminomethyldihydrolipoyl]-L-lysyl-[protein] + (6S)-5,6,7,8-tetrahydrofolate = N(6)-[(R)-dihydrolipoyl]-L-lysyl-[protein] + (6R)-5,10-methylene-5,6,7,8-tetrahydrofolate + NH4(+)</text>
        <dbReference type="Rhea" id="RHEA:16945"/>
        <dbReference type="Rhea" id="RHEA-COMP:10475"/>
        <dbReference type="Rhea" id="RHEA-COMP:10492"/>
        <dbReference type="ChEBI" id="CHEBI:15636"/>
        <dbReference type="ChEBI" id="CHEBI:28938"/>
        <dbReference type="ChEBI" id="CHEBI:57453"/>
        <dbReference type="ChEBI" id="CHEBI:83100"/>
        <dbReference type="ChEBI" id="CHEBI:83143"/>
        <dbReference type="EC" id="2.1.2.10"/>
    </reaction>
</comment>
<comment type="subunit">
    <text evidence="1">The glycine cleavage system is composed of four proteins: P, T, L and H.</text>
</comment>
<comment type="similarity">
    <text evidence="1">Belongs to the GcvT family.</text>
</comment>
<accession>Q81M06</accession>
<accession>Q6HTF8</accession>
<accession>Q6KMQ1</accession>
<protein>
    <recommendedName>
        <fullName evidence="1">Aminomethyltransferase</fullName>
        <ecNumber evidence="1">2.1.2.10</ecNumber>
    </recommendedName>
    <alternativeName>
        <fullName evidence="1">Glycine cleavage system T protein</fullName>
    </alternativeName>
</protein>
<reference key="1">
    <citation type="journal article" date="2003" name="Nature">
        <title>The genome sequence of Bacillus anthracis Ames and comparison to closely related bacteria.</title>
        <authorList>
            <person name="Read T.D."/>
            <person name="Peterson S.N."/>
            <person name="Tourasse N.J."/>
            <person name="Baillie L.W."/>
            <person name="Paulsen I.T."/>
            <person name="Nelson K.E."/>
            <person name="Tettelin H."/>
            <person name="Fouts D.E."/>
            <person name="Eisen J.A."/>
            <person name="Gill S.R."/>
            <person name="Holtzapple E.K."/>
            <person name="Okstad O.A."/>
            <person name="Helgason E."/>
            <person name="Rilstone J."/>
            <person name="Wu M."/>
            <person name="Kolonay J.F."/>
            <person name="Beanan M.J."/>
            <person name="Dodson R.J."/>
            <person name="Brinkac L.M."/>
            <person name="Gwinn M.L."/>
            <person name="DeBoy R.T."/>
            <person name="Madpu R."/>
            <person name="Daugherty S.C."/>
            <person name="Durkin A.S."/>
            <person name="Haft D.H."/>
            <person name="Nelson W.C."/>
            <person name="Peterson J.D."/>
            <person name="Pop M."/>
            <person name="Khouri H.M."/>
            <person name="Radune D."/>
            <person name="Benton J.L."/>
            <person name="Mahamoud Y."/>
            <person name="Jiang L."/>
            <person name="Hance I.R."/>
            <person name="Weidman J.F."/>
            <person name="Berry K.J."/>
            <person name="Plaut R.D."/>
            <person name="Wolf A.M."/>
            <person name="Watkins K.L."/>
            <person name="Nierman W.C."/>
            <person name="Hazen A."/>
            <person name="Cline R.T."/>
            <person name="Redmond C."/>
            <person name="Thwaite J.E."/>
            <person name="White O."/>
            <person name="Salzberg S.L."/>
            <person name="Thomason B."/>
            <person name="Friedlander A.M."/>
            <person name="Koehler T.M."/>
            <person name="Hanna P.C."/>
            <person name="Kolstoe A.-B."/>
            <person name="Fraser C.M."/>
        </authorList>
    </citation>
    <scope>NUCLEOTIDE SEQUENCE [LARGE SCALE GENOMIC DNA]</scope>
    <source>
        <strain>Ames / isolate Porton</strain>
    </source>
</reference>
<reference key="2">
    <citation type="journal article" date="2009" name="J. Bacteriol.">
        <title>The complete genome sequence of Bacillus anthracis Ames 'Ancestor'.</title>
        <authorList>
            <person name="Ravel J."/>
            <person name="Jiang L."/>
            <person name="Stanley S.T."/>
            <person name="Wilson M.R."/>
            <person name="Decker R.S."/>
            <person name="Read T.D."/>
            <person name="Worsham P."/>
            <person name="Keim P.S."/>
            <person name="Salzberg S.L."/>
            <person name="Fraser-Liggett C.M."/>
            <person name="Rasko D.A."/>
        </authorList>
    </citation>
    <scope>NUCLEOTIDE SEQUENCE [LARGE SCALE GENOMIC DNA]</scope>
    <source>
        <strain>Ames ancestor</strain>
    </source>
</reference>
<reference key="3">
    <citation type="submission" date="2004-01" db="EMBL/GenBank/DDBJ databases">
        <title>Complete genome sequence of Bacillus anthracis Sterne.</title>
        <authorList>
            <person name="Brettin T.S."/>
            <person name="Bruce D."/>
            <person name="Challacombe J.F."/>
            <person name="Gilna P."/>
            <person name="Han C."/>
            <person name="Hill K."/>
            <person name="Hitchcock P."/>
            <person name="Jackson P."/>
            <person name="Keim P."/>
            <person name="Longmire J."/>
            <person name="Lucas S."/>
            <person name="Okinaka R."/>
            <person name="Richardson P."/>
            <person name="Rubin E."/>
            <person name="Tice H."/>
        </authorList>
    </citation>
    <scope>NUCLEOTIDE SEQUENCE [LARGE SCALE GENOMIC DNA]</scope>
    <source>
        <strain>Sterne</strain>
    </source>
</reference>
<keyword id="KW-0032">Aminotransferase</keyword>
<keyword id="KW-1185">Reference proteome</keyword>
<keyword id="KW-0808">Transferase</keyword>
<dbReference type="EC" id="2.1.2.10" evidence="1"/>
<dbReference type="EMBL" id="AE016879">
    <property type="protein sequence ID" value="AAP28163.1"/>
    <property type="molecule type" value="Genomic_DNA"/>
</dbReference>
<dbReference type="EMBL" id="AE017334">
    <property type="protein sequence ID" value="AAT33568.1"/>
    <property type="molecule type" value="Genomic_DNA"/>
</dbReference>
<dbReference type="EMBL" id="AE017225">
    <property type="protein sequence ID" value="AAT56431.1"/>
    <property type="molecule type" value="Genomic_DNA"/>
</dbReference>
<dbReference type="RefSeq" id="NP_846677.1">
    <property type="nucleotide sequence ID" value="NC_003997.3"/>
</dbReference>
<dbReference type="RefSeq" id="WP_000631769.1">
    <property type="nucleotide sequence ID" value="NZ_WXXJ01000027.1"/>
</dbReference>
<dbReference type="RefSeq" id="YP_030380.1">
    <property type="nucleotide sequence ID" value="NC_005945.1"/>
</dbReference>
<dbReference type="SMR" id="Q81M06"/>
<dbReference type="IntAct" id="Q81M06">
    <property type="interactions" value="2"/>
</dbReference>
<dbReference type="STRING" id="261594.GBAA_4449"/>
<dbReference type="DNASU" id="1087845"/>
<dbReference type="GeneID" id="72450912"/>
<dbReference type="KEGG" id="ban:BA_4449"/>
<dbReference type="KEGG" id="banh:HYU01_21715"/>
<dbReference type="KEGG" id="bar:GBAA_4449"/>
<dbReference type="KEGG" id="bat:BAS4131"/>
<dbReference type="PATRIC" id="fig|198094.11.peg.4419"/>
<dbReference type="eggNOG" id="COG0404">
    <property type="taxonomic scope" value="Bacteria"/>
</dbReference>
<dbReference type="HOGENOM" id="CLU_007884_10_2_9"/>
<dbReference type="OMA" id="MPVQYPA"/>
<dbReference type="OrthoDB" id="9774591at2"/>
<dbReference type="Proteomes" id="UP000000427">
    <property type="component" value="Chromosome"/>
</dbReference>
<dbReference type="Proteomes" id="UP000000594">
    <property type="component" value="Chromosome"/>
</dbReference>
<dbReference type="GO" id="GO:0005829">
    <property type="term" value="C:cytosol"/>
    <property type="evidence" value="ECO:0007669"/>
    <property type="project" value="TreeGrafter"/>
</dbReference>
<dbReference type="GO" id="GO:0005960">
    <property type="term" value="C:glycine cleavage complex"/>
    <property type="evidence" value="ECO:0007669"/>
    <property type="project" value="InterPro"/>
</dbReference>
<dbReference type="GO" id="GO:0004047">
    <property type="term" value="F:aminomethyltransferase activity"/>
    <property type="evidence" value="ECO:0007669"/>
    <property type="project" value="UniProtKB-UniRule"/>
</dbReference>
<dbReference type="GO" id="GO:0008483">
    <property type="term" value="F:transaminase activity"/>
    <property type="evidence" value="ECO:0007669"/>
    <property type="project" value="UniProtKB-KW"/>
</dbReference>
<dbReference type="GO" id="GO:0019464">
    <property type="term" value="P:glycine decarboxylation via glycine cleavage system"/>
    <property type="evidence" value="ECO:0007669"/>
    <property type="project" value="UniProtKB-UniRule"/>
</dbReference>
<dbReference type="FunFam" id="2.40.30.110:FF:000003">
    <property type="entry name" value="Aminomethyltransferase"/>
    <property type="match status" value="1"/>
</dbReference>
<dbReference type="FunFam" id="3.30.70.1400:FF:000001">
    <property type="entry name" value="Aminomethyltransferase"/>
    <property type="match status" value="1"/>
</dbReference>
<dbReference type="FunFam" id="4.10.1250.10:FF:000001">
    <property type="entry name" value="Aminomethyltransferase"/>
    <property type="match status" value="1"/>
</dbReference>
<dbReference type="Gene3D" id="2.40.30.110">
    <property type="entry name" value="Aminomethyltransferase beta-barrel domains"/>
    <property type="match status" value="1"/>
</dbReference>
<dbReference type="Gene3D" id="3.30.70.1400">
    <property type="entry name" value="Aminomethyltransferase beta-barrel domains"/>
    <property type="match status" value="1"/>
</dbReference>
<dbReference type="Gene3D" id="4.10.1250.10">
    <property type="entry name" value="Aminomethyltransferase fragment"/>
    <property type="match status" value="1"/>
</dbReference>
<dbReference type="Gene3D" id="3.30.1360.120">
    <property type="entry name" value="Probable tRNA modification gtpase trme, domain 1"/>
    <property type="match status" value="1"/>
</dbReference>
<dbReference type="HAMAP" id="MF_00259">
    <property type="entry name" value="GcvT"/>
    <property type="match status" value="1"/>
</dbReference>
<dbReference type="InterPro" id="IPR006223">
    <property type="entry name" value="GCS_T"/>
</dbReference>
<dbReference type="InterPro" id="IPR022903">
    <property type="entry name" value="GCS_T_bac"/>
</dbReference>
<dbReference type="InterPro" id="IPR013977">
    <property type="entry name" value="GCST_C"/>
</dbReference>
<dbReference type="InterPro" id="IPR006222">
    <property type="entry name" value="GCV_T_N"/>
</dbReference>
<dbReference type="InterPro" id="IPR028896">
    <property type="entry name" value="GcvT/YgfZ/DmdA"/>
</dbReference>
<dbReference type="InterPro" id="IPR029043">
    <property type="entry name" value="GcvT/YgfZ_C"/>
</dbReference>
<dbReference type="InterPro" id="IPR027266">
    <property type="entry name" value="TrmE/GcvT_dom1"/>
</dbReference>
<dbReference type="NCBIfam" id="TIGR00528">
    <property type="entry name" value="gcvT"/>
    <property type="match status" value="1"/>
</dbReference>
<dbReference type="NCBIfam" id="NF001567">
    <property type="entry name" value="PRK00389.1"/>
    <property type="match status" value="1"/>
</dbReference>
<dbReference type="PANTHER" id="PTHR43757">
    <property type="entry name" value="AMINOMETHYLTRANSFERASE"/>
    <property type="match status" value="1"/>
</dbReference>
<dbReference type="PANTHER" id="PTHR43757:SF2">
    <property type="entry name" value="AMINOMETHYLTRANSFERASE, MITOCHONDRIAL"/>
    <property type="match status" value="1"/>
</dbReference>
<dbReference type="Pfam" id="PF01571">
    <property type="entry name" value="GCV_T"/>
    <property type="match status" value="1"/>
</dbReference>
<dbReference type="Pfam" id="PF08669">
    <property type="entry name" value="GCV_T_C"/>
    <property type="match status" value="1"/>
</dbReference>
<dbReference type="PIRSF" id="PIRSF006487">
    <property type="entry name" value="GcvT"/>
    <property type="match status" value="1"/>
</dbReference>
<dbReference type="SUPFAM" id="SSF101790">
    <property type="entry name" value="Aminomethyltransferase beta-barrel domain"/>
    <property type="match status" value="1"/>
</dbReference>
<dbReference type="SUPFAM" id="SSF103025">
    <property type="entry name" value="Folate-binding domain"/>
    <property type="match status" value="1"/>
</dbReference>
<proteinExistence type="inferred from homology"/>
<sequence length="366" mass="40225">MITLQRTPLFDVYAKYGGKTIDFGGWELPVQFSSIKEEHEAVRTAAGLFDVSHMGEVEVKGVDSLAFLQRVVTNDVSTLKVGGAQYTAMCYENGGTVDDLLIYKRGEEDYLLVINASNIEKDYEWLASHVIGDATVVNVSSEVAQLAIQGPKAEGILQKVVSEDLKEIKFFKFKNDILVDGIPALVSRTGYTGEDGFEIYCKSEDAAKLWEKLLEVGAEEGLKACGLGARDTLRFEATLPLYGQELSKDITPIEAGIGFAVKTNKEADFFGKATLKEQKENGAPRKLVGIEVIERGIPRTHYPVFIGEEKIGEVTSGTQSPTLKKSIGLALIDVKYAAVDTEVEIEIRNKRVKAVVVPTPFYKRSK</sequence>
<evidence type="ECO:0000255" key="1">
    <source>
        <dbReference type="HAMAP-Rule" id="MF_00259"/>
    </source>
</evidence>
<feature type="chain" id="PRO_0000122535" description="Aminomethyltransferase">
    <location>
        <begin position="1"/>
        <end position="366"/>
    </location>
</feature>
<organism>
    <name type="scientific">Bacillus anthracis</name>
    <dbReference type="NCBI Taxonomy" id="1392"/>
    <lineage>
        <taxon>Bacteria</taxon>
        <taxon>Bacillati</taxon>
        <taxon>Bacillota</taxon>
        <taxon>Bacilli</taxon>
        <taxon>Bacillales</taxon>
        <taxon>Bacillaceae</taxon>
        <taxon>Bacillus</taxon>
        <taxon>Bacillus cereus group</taxon>
    </lineage>
</organism>